<organism>
    <name type="scientific">Schizosaccharomyces pombe (strain 972 / ATCC 24843)</name>
    <name type="common">Fission yeast</name>
    <dbReference type="NCBI Taxonomy" id="284812"/>
    <lineage>
        <taxon>Eukaryota</taxon>
        <taxon>Fungi</taxon>
        <taxon>Dikarya</taxon>
        <taxon>Ascomycota</taxon>
        <taxon>Taphrinomycotina</taxon>
        <taxon>Schizosaccharomycetes</taxon>
        <taxon>Schizosaccharomycetales</taxon>
        <taxon>Schizosaccharomycetaceae</taxon>
        <taxon>Schizosaccharomyces</taxon>
    </lineage>
</organism>
<dbReference type="EC" id="3.1.26.4"/>
<dbReference type="EMBL" id="CU329670">
    <property type="protein sequence ID" value="CAA93552.1"/>
    <property type="molecule type" value="Genomic_DNA"/>
</dbReference>
<dbReference type="PIR" id="T38861">
    <property type="entry name" value="T38861"/>
</dbReference>
<dbReference type="RefSeq" id="NP_593684.1">
    <property type="nucleotide sequence ID" value="NM_001019116.2"/>
</dbReference>
<dbReference type="SMR" id="Q10236"/>
<dbReference type="BioGRID" id="278042">
    <property type="interactions" value="27"/>
</dbReference>
<dbReference type="FunCoup" id="Q10236">
    <property type="interactions" value="148"/>
</dbReference>
<dbReference type="STRING" id="284812.Q10236"/>
<dbReference type="PaxDb" id="4896-SPAC4G9.02.1"/>
<dbReference type="EnsemblFungi" id="SPAC4G9.02.1">
    <property type="protein sequence ID" value="SPAC4G9.02.1:pep"/>
    <property type="gene ID" value="SPAC4G9.02"/>
</dbReference>
<dbReference type="GeneID" id="2541542"/>
<dbReference type="KEGG" id="spo:2541542"/>
<dbReference type="PomBase" id="SPAC4G9.02">
    <property type="gene designation" value="rnh201"/>
</dbReference>
<dbReference type="VEuPathDB" id="FungiDB:SPAC4G9.02"/>
<dbReference type="eggNOG" id="KOG2299">
    <property type="taxonomic scope" value="Eukaryota"/>
</dbReference>
<dbReference type="HOGENOM" id="CLU_036532_0_1_1"/>
<dbReference type="InParanoid" id="Q10236"/>
<dbReference type="OMA" id="WILGIFE"/>
<dbReference type="PhylomeDB" id="Q10236"/>
<dbReference type="PRO" id="PR:Q10236"/>
<dbReference type="Proteomes" id="UP000002485">
    <property type="component" value="Chromosome I"/>
</dbReference>
<dbReference type="GO" id="GO:0005634">
    <property type="term" value="C:nucleus"/>
    <property type="evidence" value="ECO:0000266"/>
    <property type="project" value="PomBase"/>
</dbReference>
<dbReference type="GO" id="GO:0032299">
    <property type="term" value="C:ribonuclease H2 complex"/>
    <property type="evidence" value="ECO:0000318"/>
    <property type="project" value="GO_Central"/>
</dbReference>
<dbReference type="GO" id="GO:0046872">
    <property type="term" value="F:metal ion binding"/>
    <property type="evidence" value="ECO:0007669"/>
    <property type="project" value="UniProtKB-KW"/>
</dbReference>
<dbReference type="GO" id="GO:0003723">
    <property type="term" value="F:RNA binding"/>
    <property type="evidence" value="ECO:0007669"/>
    <property type="project" value="InterPro"/>
</dbReference>
<dbReference type="GO" id="GO:0004523">
    <property type="term" value="F:RNA-DNA hybrid ribonuclease activity"/>
    <property type="evidence" value="ECO:0000314"/>
    <property type="project" value="PomBase"/>
</dbReference>
<dbReference type="GO" id="GO:0043137">
    <property type="term" value="P:DNA replication, removal of RNA primer"/>
    <property type="evidence" value="ECO:0000318"/>
    <property type="project" value="GO_Central"/>
</dbReference>
<dbReference type="GO" id="GO:0006298">
    <property type="term" value="P:mismatch repair"/>
    <property type="evidence" value="ECO:0000318"/>
    <property type="project" value="GO_Central"/>
</dbReference>
<dbReference type="GO" id="GO:0070716">
    <property type="term" value="P:mismatch repair involved in maintenance of fidelity involved in DNA-dependent DNA replication"/>
    <property type="evidence" value="ECO:0000314"/>
    <property type="project" value="PomBase"/>
</dbReference>
<dbReference type="GO" id="GO:0033260">
    <property type="term" value="P:nuclear DNA replication"/>
    <property type="evidence" value="ECO:0000266"/>
    <property type="project" value="PomBase"/>
</dbReference>
<dbReference type="GO" id="GO:1990516">
    <property type="term" value="P:ribonucleotide excision repair"/>
    <property type="evidence" value="ECO:0000314"/>
    <property type="project" value="PomBase"/>
</dbReference>
<dbReference type="GO" id="GO:0006401">
    <property type="term" value="P:RNA catabolic process"/>
    <property type="evidence" value="ECO:0000315"/>
    <property type="project" value="PomBase"/>
</dbReference>
<dbReference type="CDD" id="cd07181">
    <property type="entry name" value="RNase_HII_eukaryota_like"/>
    <property type="match status" value="1"/>
</dbReference>
<dbReference type="FunFam" id="1.10.10.460:FF:000001">
    <property type="entry name" value="Ribonuclease"/>
    <property type="match status" value="1"/>
</dbReference>
<dbReference type="FunFam" id="3.30.420.10:FF:000016">
    <property type="entry name" value="Ribonuclease"/>
    <property type="match status" value="1"/>
</dbReference>
<dbReference type="Gene3D" id="3.30.420.10">
    <property type="entry name" value="Ribonuclease H-like superfamily/Ribonuclease H"/>
    <property type="match status" value="1"/>
</dbReference>
<dbReference type="Gene3D" id="1.10.10.460">
    <property type="entry name" value="Ribonuclease hii. Domain 2"/>
    <property type="match status" value="1"/>
</dbReference>
<dbReference type="InterPro" id="IPR004649">
    <property type="entry name" value="RNase_H2_suA"/>
</dbReference>
<dbReference type="InterPro" id="IPR001352">
    <property type="entry name" value="RNase_HII/HIII"/>
</dbReference>
<dbReference type="InterPro" id="IPR024567">
    <property type="entry name" value="RNase_HII/HIII_dom"/>
</dbReference>
<dbReference type="InterPro" id="IPR023160">
    <property type="entry name" value="RNase_HII_hlx-loop-hlx_cap_dom"/>
</dbReference>
<dbReference type="InterPro" id="IPR012337">
    <property type="entry name" value="RNaseH-like_sf"/>
</dbReference>
<dbReference type="InterPro" id="IPR036397">
    <property type="entry name" value="RNaseH_sf"/>
</dbReference>
<dbReference type="NCBIfam" id="TIGR00729">
    <property type="entry name" value="ribonuclease HII"/>
    <property type="match status" value="1"/>
</dbReference>
<dbReference type="PANTHER" id="PTHR10954">
    <property type="entry name" value="RIBONUCLEASE H2 SUBUNIT A"/>
    <property type="match status" value="1"/>
</dbReference>
<dbReference type="PANTHER" id="PTHR10954:SF7">
    <property type="entry name" value="RIBONUCLEASE H2 SUBUNIT A"/>
    <property type="match status" value="1"/>
</dbReference>
<dbReference type="Pfam" id="PF01351">
    <property type="entry name" value="RNase_HII"/>
    <property type="match status" value="1"/>
</dbReference>
<dbReference type="SUPFAM" id="SSF53098">
    <property type="entry name" value="Ribonuclease H-like"/>
    <property type="match status" value="1"/>
</dbReference>
<dbReference type="PROSITE" id="PS51975">
    <property type="entry name" value="RNASE_H_2"/>
    <property type="match status" value="1"/>
</dbReference>
<feature type="chain" id="PRO_0000111717" description="Ribonuclease H2 subunit A">
    <location>
        <begin position="1"/>
        <end position="326"/>
    </location>
</feature>
<feature type="domain" description="RNase H type-2" evidence="2">
    <location>
        <begin position="63"/>
        <end position="286"/>
    </location>
</feature>
<feature type="region of interest" description="Disordered" evidence="3">
    <location>
        <begin position="1"/>
        <end position="47"/>
    </location>
</feature>
<feature type="compositionally biased region" description="Polar residues" evidence="3">
    <location>
        <begin position="15"/>
        <end position="47"/>
    </location>
</feature>
<feature type="binding site" evidence="1">
    <location>
        <position position="69"/>
    </location>
    <ligand>
        <name>a divalent metal cation</name>
        <dbReference type="ChEBI" id="CHEBI:60240"/>
    </ligand>
</feature>
<feature type="binding site" evidence="1">
    <location>
        <position position="70"/>
    </location>
    <ligand>
        <name>a divalent metal cation</name>
        <dbReference type="ChEBI" id="CHEBI:60240"/>
    </ligand>
</feature>
<feature type="binding site" evidence="1">
    <location>
        <position position="180"/>
    </location>
    <ligand>
        <name>a divalent metal cation</name>
        <dbReference type="ChEBI" id="CHEBI:60240"/>
    </ligand>
</feature>
<sequence>MKDDHDAWEPEELVSDNNSSENELQEDQNSSITFLPPSVNKSNPAKSNYYHSTVTDDISKSQPYRLGVDEAGRGPVLGPMVYAVAYCPVDFDLTNYGFADSKTLASLKREELLKLICNKSNELGKNVGWSTMSISARELAAGMLRYRNKYNLNLQAHDTTIDLIKKVYESGINVTEIYVDTVGPPISYQEKLQAHFPQAKVTVTKKADSLFPIVSLASICAKVTRDIQLECARESIRTENWGSGYSSDARTTEWLKVNVDKIFGWKGDIVRYSWKTAKDLLELPSKSQSSIEIDWHEDDDTPTLNFTQKKKPNPASRSWFGSEFYF</sequence>
<gene>
    <name type="primary">rnh201</name>
    <name type="ORF">SPAC4G9.02</name>
</gene>
<keyword id="KW-0255">Endonuclease</keyword>
<keyword id="KW-0378">Hydrolase</keyword>
<keyword id="KW-0479">Metal-binding</keyword>
<keyword id="KW-0540">Nuclease</keyword>
<keyword id="KW-1185">Reference proteome</keyword>
<comment type="function">
    <text>Endonuclease that specifically degrades the RNA of RNA-DNA hybrids. Participates in DNA replication.</text>
</comment>
<comment type="catalytic activity">
    <reaction>
        <text>Endonucleolytic cleavage to 5'-phosphomonoester.</text>
        <dbReference type="EC" id="3.1.26.4"/>
    </reaction>
</comment>
<comment type="cofactor">
    <cofactor evidence="1">
        <name>Mn(2+)</name>
        <dbReference type="ChEBI" id="CHEBI:29035"/>
    </cofactor>
    <cofactor evidence="1">
        <name>Mg(2+)</name>
        <dbReference type="ChEBI" id="CHEBI:18420"/>
    </cofactor>
    <text evidence="1">Manganese or magnesium. Binds 1 divalent metal ion per monomer in the absence of substrate. May bind a second metal ion after substrate binding.</text>
</comment>
<comment type="similarity">
    <text evidence="4">Belongs to the RNase HII family. Eukaryotic subfamily.</text>
</comment>
<accession>Q10236</accession>
<proteinExistence type="inferred from homology"/>
<name>RNH2A_SCHPO</name>
<evidence type="ECO:0000250" key="1"/>
<evidence type="ECO:0000255" key="2">
    <source>
        <dbReference type="PROSITE-ProRule" id="PRU01319"/>
    </source>
</evidence>
<evidence type="ECO:0000256" key="3">
    <source>
        <dbReference type="SAM" id="MobiDB-lite"/>
    </source>
</evidence>
<evidence type="ECO:0000305" key="4"/>
<reference key="1">
    <citation type="journal article" date="2002" name="Nature">
        <title>The genome sequence of Schizosaccharomyces pombe.</title>
        <authorList>
            <person name="Wood V."/>
            <person name="Gwilliam R."/>
            <person name="Rajandream M.A."/>
            <person name="Lyne M.H."/>
            <person name="Lyne R."/>
            <person name="Stewart A."/>
            <person name="Sgouros J.G."/>
            <person name="Peat N."/>
            <person name="Hayles J."/>
            <person name="Baker S.G."/>
            <person name="Basham D."/>
            <person name="Bowman S."/>
            <person name="Brooks K."/>
            <person name="Brown D."/>
            <person name="Brown S."/>
            <person name="Chillingworth T."/>
            <person name="Churcher C.M."/>
            <person name="Collins M."/>
            <person name="Connor R."/>
            <person name="Cronin A."/>
            <person name="Davis P."/>
            <person name="Feltwell T."/>
            <person name="Fraser A."/>
            <person name="Gentles S."/>
            <person name="Goble A."/>
            <person name="Hamlin N."/>
            <person name="Harris D.E."/>
            <person name="Hidalgo J."/>
            <person name="Hodgson G."/>
            <person name="Holroyd S."/>
            <person name="Hornsby T."/>
            <person name="Howarth S."/>
            <person name="Huckle E.J."/>
            <person name="Hunt S."/>
            <person name="Jagels K."/>
            <person name="James K.D."/>
            <person name="Jones L."/>
            <person name="Jones M."/>
            <person name="Leather S."/>
            <person name="McDonald S."/>
            <person name="McLean J."/>
            <person name="Mooney P."/>
            <person name="Moule S."/>
            <person name="Mungall K.L."/>
            <person name="Murphy L.D."/>
            <person name="Niblett D."/>
            <person name="Odell C."/>
            <person name="Oliver K."/>
            <person name="O'Neil S."/>
            <person name="Pearson D."/>
            <person name="Quail M.A."/>
            <person name="Rabbinowitsch E."/>
            <person name="Rutherford K.M."/>
            <person name="Rutter S."/>
            <person name="Saunders D."/>
            <person name="Seeger K."/>
            <person name="Sharp S."/>
            <person name="Skelton J."/>
            <person name="Simmonds M.N."/>
            <person name="Squares R."/>
            <person name="Squares S."/>
            <person name="Stevens K."/>
            <person name="Taylor K."/>
            <person name="Taylor R.G."/>
            <person name="Tivey A."/>
            <person name="Walsh S.V."/>
            <person name="Warren T."/>
            <person name="Whitehead S."/>
            <person name="Woodward J.R."/>
            <person name="Volckaert G."/>
            <person name="Aert R."/>
            <person name="Robben J."/>
            <person name="Grymonprez B."/>
            <person name="Weltjens I."/>
            <person name="Vanstreels E."/>
            <person name="Rieger M."/>
            <person name="Schaefer M."/>
            <person name="Mueller-Auer S."/>
            <person name="Gabel C."/>
            <person name="Fuchs M."/>
            <person name="Duesterhoeft A."/>
            <person name="Fritzc C."/>
            <person name="Holzer E."/>
            <person name="Moestl D."/>
            <person name="Hilbert H."/>
            <person name="Borzym K."/>
            <person name="Langer I."/>
            <person name="Beck A."/>
            <person name="Lehrach H."/>
            <person name="Reinhardt R."/>
            <person name="Pohl T.M."/>
            <person name="Eger P."/>
            <person name="Zimmermann W."/>
            <person name="Wedler H."/>
            <person name="Wambutt R."/>
            <person name="Purnelle B."/>
            <person name="Goffeau A."/>
            <person name="Cadieu E."/>
            <person name="Dreano S."/>
            <person name="Gloux S."/>
            <person name="Lelaure V."/>
            <person name="Mottier S."/>
            <person name="Galibert F."/>
            <person name="Aves S.J."/>
            <person name="Xiang Z."/>
            <person name="Hunt C."/>
            <person name="Moore K."/>
            <person name="Hurst S.M."/>
            <person name="Lucas M."/>
            <person name="Rochet M."/>
            <person name="Gaillardin C."/>
            <person name="Tallada V.A."/>
            <person name="Garzon A."/>
            <person name="Thode G."/>
            <person name="Daga R.R."/>
            <person name="Cruzado L."/>
            <person name="Jimenez J."/>
            <person name="Sanchez M."/>
            <person name="del Rey F."/>
            <person name="Benito J."/>
            <person name="Dominguez A."/>
            <person name="Revuelta J.L."/>
            <person name="Moreno S."/>
            <person name="Armstrong J."/>
            <person name="Forsburg S.L."/>
            <person name="Cerutti L."/>
            <person name="Lowe T."/>
            <person name="McCombie W.R."/>
            <person name="Paulsen I."/>
            <person name="Potashkin J."/>
            <person name="Shpakovski G.V."/>
            <person name="Ussery D."/>
            <person name="Barrell B.G."/>
            <person name="Nurse P."/>
        </authorList>
    </citation>
    <scope>NUCLEOTIDE SEQUENCE [LARGE SCALE GENOMIC DNA]</scope>
    <source>
        <strain>972 / ATCC 24843</strain>
    </source>
</reference>
<protein>
    <recommendedName>
        <fullName>Ribonuclease H2 subunit A</fullName>
        <shortName>RNase H2 subunit A</shortName>
        <ecNumber>3.1.26.4</ecNumber>
    </recommendedName>
    <alternativeName>
        <fullName>Ribonuclease HI large subunit</fullName>
        <shortName>RNase HI large subunit</shortName>
    </alternativeName>
    <alternativeName>
        <fullName>Ribonuclease HI subunit A</fullName>
    </alternativeName>
</protein>